<sequence length="507" mass="56616">MKLRVHNTLSGLKEEFFPLSSEVVRMYVCGPTVYDVPHIGNIRASVVYDIVYRVLLKLFPEVIYVRNITDVDDKIITAASVRGVKCDKVALHYEHIFHEHLGLLNCLSPTVEPKATQNIGKMISMIQALIDNGNAYSVGGNVYFDVGSFAEYGVLSKRKKEQLVYGVRVEKDVDKKHPGDFILWKSDDHVYWPSPWGNGRPGWHIECSAMTLATLGADFDIHGGGADLKFPHHENERAQSMCANPGSQFARYWVHNGFLTVNGEKMSKSLGNVVNVDTLVESGVTPNVIRFVLISTHYSKPLDWNDAMVGEAINSLIKFKLALLDSGVLPKSKSHIGSLNIGVCSDNAEDEEVDPRSCASEVIVARNKRKAKNFSKKMNEIFNKFGGLGDDCSIYTREFFECMADDFNTPGAIAVLHKLSDGVRLVGAEKVNNLAHLLYNLLIFLGIDLGVRQSSVSEDFIRSQLQKRADCKRQKDFVEADRIRFALAKMGVLIRDHKHAPTDWVSL</sequence>
<name>SYC_NEOSM</name>
<reference key="1">
    <citation type="journal article" date="2006" name="PLoS Genet.">
        <title>Comparative genomics of emerging human ehrlichiosis agents.</title>
        <authorList>
            <person name="Dunning Hotopp J.C."/>
            <person name="Lin M."/>
            <person name="Madupu R."/>
            <person name="Crabtree J."/>
            <person name="Angiuoli S.V."/>
            <person name="Eisen J.A."/>
            <person name="Seshadri R."/>
            <person name="Ren Q."/>
            <person name="Wu M."/>
            <person name="Utterback T.R."/>
            <person name="Smith S."/>
            <person name="Lewis M."/>
            <person name="Khouri H."/>
            <person name="Zhang C."/>
            <person name="Niu H."/>
            <person name="Lin Q."/>
            <person name="Ohashi N."/>
            <person name="Zhi N."/>
            <person name="Nelson W.C."/>
            <person name="Brinkac L.M."/>
            <person name="Dodson R.J."/>
            <person name="Rosovitz M.J."/>
            <person name="Sundaram J.P."/>
            <person name="Daugherty S.C."/>
            <person name="Davidsen T."/>
            <person name="Durkin A.S."/>
            <person name="Gwinn M.L."/>
            <person name="Haft D.H."/>
            <person name="Selengut J.D."/>
            <person name="Sullivan S.A."/>
            <person name="Zafar N."/>
            <person name="Zhou L."/>
            <person name="Benahmed F."/>
            <person name="Forberger H."/>
            <person name="Halpin R."/>
            <person name="Mulligan S."/>
            <person name="Robinson J."/>
            <person name="White O."/>
            <person name="Rikihisa Y."/>
            <person name="Tettelin H."/>
        </authorList>
    </citation>
    <scope>NUCLEOTIDE SEQUENCE [LARGE SCALE GENOMIC DNA]</scope>
    <source>
        <strain>ATCC VR-367 / Miyayama</strain>
    </source>
</reference>
<comment type="catalytic activity">
    <reaction evidence="1">
        <text>tRNA(Cys) + L-cysteine + ATP = L-cysteinyl-tRNA(Cys) + AMP + diphosphate</text>
        <dbReference type="Rhea" id="RHEA:17773"/>
        <dbReference type="Rhea" id="RHEA-COMP:9661"/>
        <dbReference type="Rhea" id="RHEA-COMP:9679"/>
        <dbReference type="ChEBI" id="CHEBI:30616"/>
        <dbReference type="ChEBI" id="CHEBI:33019"/>
        <dbReference type="ChEBI" id="CHEBI:35235"/>
        <dbReference type="ChEBI" id="CHEBI:78442"/>
        <dbReference type="ChEBI" id="CHEBI:78517"/>
        <dbReference type="ChEBI" id="CHEBI:456215"/>
        <dbReference type="EC" id="6.1.1.16"/>
    </reaction>
</comment>
<comment type="cofactor">
    <cofactor evidence="1">
        <name>Zn(2+)</name>
        <dbReference type="ChEBI" id="CHEBI:29105"/>
    </cofactor>
    <text evidence="1">Binds 1 zinc ion per subunit.</text>
</comment>
<comment type="subunit">
    <text evidence="1">Monomer.</text>
</comment>
<comment type="subcellular location">
    <subcellularLocation>
        <location evidence="1">Cytoplasm</location>
    </subcellularLocation>
</comment>
<comment type="similarity">
    <text evidence="1">Belongs to the class-I aminoacyl-tRNA synthetase family.</text>
</comment>
<proteinExistence type="inferred from homology"/>
<organism>
    <name type="scientific">Neorickettsia sennetsu (strain ATCC VR-367 / Miyayama)</name>
    <name type="common">Ehrlichia sennetsu</name>
    <dbReference type="NCBI Taxonomy" id="222891"/>
    <lineage>
        <taxon>Bacteria</taxon>
        <taxon>Pseudomonadati</taxon>
        <taxon>Pseudomonadota</taxon>
        <taxon>Alphaproteobacteria</taxon>
        <taxon>Rickettsiales</taxon>
        <taxon>Anaplasmataceae</taxon>
        <taxon>Neorickettsia</taxon>
    </lineage>
</organism>
<gene>
    <name evidence="1" type="primary">cysS</name>
    <name type="ordered locus">NSE_0333</name>
</gene>
<protein>
    <recommendedName>
        <fullName evidence="1">Cysteine--tRNA ligase</fullName>
        <ecNumber evidence="1">6.1.1.16</ecNumber>
    </recommendedName>
    <alternativeName>
        <fullName evidence="1">Cysteinyl-tRNA synthetase</fullName>
        <shortName evidence="1">CysRS</shortName>
    </alternativeName>
</protein>
<dbReference type="EC" id="6.1.1.16" evidence="1"/>
<dbReference type="EMBL" id="CP000237">
    <property type="protein sequence ID" value="ABD45822.1"/>
    <property type="molecule type" value="Genomic_DNA"/>
</dbReference>
<dbReference type="RefSeq" id="WP_011451728.1">
    <property type="nucleotide sequence ID" value="NC_007798.1"/>
</dbReference>
<dbReference type="SMR" id="Q2GE74"/>
<dbReference type="STRING" id="222891.NSE_0333"/>
<dbReference type="KEGG" id="nse:NSE_0333"/>
<dbReference type="eggNOG" id="COG0215">
    <property type="taxonomic scope" value="Bacteria"/>
</dbReference>
<dbReference type="HOGENOM" id="CLU_013528_0_1_5"/>
<dbReference type="OrthoDB" id="9815130at2"/>
<dbReference type="Proteomes" id="UP000001942">
    <property type="component" value="Chromosome"/>
</dbReference>
<dbReference type="GO" id="GO:0005829">
    <property type="term" value="C:cytosol"/>
    <property type="evidence" value="ECO:0007669"/>
    <property type="project" value="TreeGrafter"/>
</dbReference>
<dbReference type="GO" id="GO:0005524">
    <property type="term" value="F:ATP binding"/>
    <property type="evidence" value="ECO:0007669"/>
    <property type="project" value="UniProtKB-UniRule"/>
</dbReference>
<dbReference type="GO" id="GO:0004817">
    <property type="term" value="F:cysteine-tRNA ligase activity"/>
    <property type="evidence" value="ECO:0007669"/>
    <property type="project" value="UniProtKB-UniRule"/>
</dbReference>
<dbReference type="GO" id="GO:0008270">
    <property type="term" value="F:zinc ion binding"/>
    <property type="evidence" value="ECO:0007669"/>
    <property type="project" value="UniProtKB-UniRule"/>
</dbReference>
<dbReference type="GO" id="GO:0006423">
    <property type="term" value="P:cysteinyl-tRNA aminoacylation"/>
    <property type="evidence" value="ECO:0007669"/>
    <property type="project" value="UniProtKB-UniRule"/>
</dbReference>
<dbReference type="CDD" id="cd00672">
    <property type="entry name" value="CysRS_core"/>
    <property type="match status" value="1"/>
</dbReference>
<dbReference type="Gene3D" id="1.20.120.1910">
    <property type="entry name" value="Cysteine-tRNA ligase, C-terminal anti-codon recognition domain"/>
    <property type="match status" value="1"/>
</dbReference>
<dbReference type="Gene3D" id="3.40.50.620">
    <property type="entry name" value="HUPs"/>
    <property type="match status" value="1"/>
</dbReference>
<dbReference type="HAMAP" id="MF_00041">
    <property type="entry name" value="Cys_tRNA_synth"/>
    <property type="match status" value="1"/>
</dbReference>
<dbReference type="InterPro" id="IPR015803">
    <property type="entry name" value="Cys-tRNA-ligase"/>
</dbReference>
<dbReference type="InterPro" id="IPR015273">
    <property type="entry name" value="Cys-tRNA-synt_Ia_DALR"/>
</dbReference>
<dbReference type="InterPro" id="IPR024909">
    <property type="entry name" value="Cys-tRNA/MSH_ligase"/>
</dbReference>
<dbReference type="InterPro" id="IPR014729">
    <property type="entry name" value="Rossmann-like_a/b/a_fold"/>
</dbReference>
<dbReference type="InterPro" id="IPR032678">
    <property type="entry name" value="tRNA-synt_1_cat_dom"/>
</dbReference>
<dbReference type="InterPro" id="IPR009080">
    <property type="entry name" value="tRNAsynth_Ia_anticodon-bd"/>
</dbReference>
<dbReference type="NCBIfam" id="TIGR00435">
    <property type="entry name" value="cysS"/>
    <property type="match status" value="1"/>
</dbReference>
<dbReference type="PANTHER" id="PTHR10890:SF3">
    <property type="entry name" value="CYSTEINE--TRNA LIGASE, CYTOPLASMIC"/>
    <property type="match status" value="1"/>
</dbReference>
<dbReference type="PANTHER" id="PTHR10890">
    <property type="entry name" value="CYSTEINYL-TRNA SYNTHETASE"/>
    <property type="match status" value="1"/>
</dbReference>
<dbReference type="Pfam" id="PF09190">
    <property type="entry name" value="DALR_2"/>
    <property type="match status" value="1"/>
</dbReference>
<dbReference type="Pfam" id="PF01406">
    <property type="entry name" value="tRNA-synt_1e"/>
    <property type="match status" value="1"/>
</dbReference>
<dbReference type="PRINTS" id="PR00983">
    <property type="entry name" value="TRNASYNTHCYS"/>
</dbReference>
<dbReference type="SMART" id="SM00840">
    <property type="entry name" value="DALR_2"/>
    <property type="match status" value="1"/>
</dbReference>
<dbReference type="SUPFAM" id="SSF47323">
    <property type="entry name" value="Anticodon-binding domain of a subclass of class I aminoacyl-tRNA synthetases"/>
    <property type="match status" value="1"/>
</dbReference>
<dbReference type="SUPFAM" id="SSF52374">
    <property type="entry name" value="Nucleotidylyl transferase"/>
    <property type="match status" value="1"/>
</dbReference>
<accession>Q2GE74</accession>
<evidence type="ECO:0000255" key="1">
    <source>
        <dbReference type="HAMAP-Rule" id="MF_00041"/>
    </source>
</evidence>
<keyword id="KW-0030">Aminoacyl-tRNA synthetase</keyword>
<keyword id="KW-0067">ATP-binding</keyword>
<keyword id="KW-0963">Cytoplasm</keyword>
<keyword id="KW-0436">Ligase</keyword>
<keyword id="KW-0479">Metal-binding</keyword>
<keyword id="KW-0547">Nucleotide-binding</keyword>
<keyword id="KW-0648">Protein biosynthesis</keyword>
<keyword id="KW-0862">Zinc</keyword>
<feature type="chain" id="PRO_0000240925" description="Cysteine--tRNA ligase">
    <location>
        <begin position="1"/>
        <end position="507"/>
    </location>
</feature>
<feature type="short sequence motif" description="'HIGH' region">
    <location>
        <begin position="31"/>
        <end position="41"/>
    </location>
</feature>
<feature type="short sequence motif" description="'KMSKS' region">
    <location>
        <begin position="265"/>
        <end position="269"/>
    </location>
</feature>
<feature type="binding site" evidence="1">
    <location>
        <position position="29"/>
    </location>
    <ligand>
        <name>Zn(2+)</name>
        <dbReference type="ChEBI" id="CHEBI:29105"/>
    </ligand>
</feature>
<feature type="binding site" evidence="1">
    <location>
        <position position="207"/>
    </location>
    <ligand>
        <name>Zn(2+)</name>
        <dbReference type="ChEBI" id="CHEBI:29105"/>
    </ligand>
</feature>
<feature type="binding site" evidence="1">
    <location>
        <position position="232"/>
    </location>
    <ligand>
        <name>Zn(2+)</name>
        <dbReference type="ChEBI" id="CHEBI:29105"/>
    </ligand>
</feature>
<feature type="binding site" evidence="1">
    <location>
        <position position="236"/>
    </location>
    <ligand>
        <name>Zn(2+)</name>
        <dbReference type="ChEBI" id="CHEBI:29105"/>
    </ligand>
</feature>
<feature type="binding site" evidence="1">
    <location>
        <position position="268"/>
    </location>
    <ligand>
        <name>ATP</name>
        <dbReference type="ChEBI" id="CHEBI:30616"/>
    </ligand>
</feature>